<reference key="1">
    <citation type="journal article" date="2009" name="Appl. Environ. Microbiol.">
        <title>Rhizobium sp. strain NGR234 possesses a remarkable number of secretion systems.</title>
        <authorList>
            <person name="Schmeisser C."/>
            <person name="Liesegang H."/>
            <person name="Krysciak D."/>
            <person name="Bakkou N."/>
            <person name="Le Quere A."/>
            <person name="Wollherr A."/>
            <person name="Heinemeyer I."/>
            <person name="Morgenstern B."/>
            <person name="Pommerening-Roeser A."/>
            <person name="Flores M."/>
            <person name="Palacios R."/>
            <person name="Brenner S."/>
            <person name="Gottschalk G."/>
            <person name="Schmitz R.A."/>
            <person name="Broughton W.J."/>
            <person name="Perret X."/>
            <person name="Strittmatter A.W."/>
            <person name="Streit W.R."/>
        </authorList>
    </citation>
    <scope>NUCLEOTIDE SEQUENCE [LARGE SCALE GENOMIC DNA]</scope>
    <source>
        <strain>NBRC 101917 / NGR234</strain>
    </source>
</reference>
<comment type="function">
    <text evidence="1">Catalyzes the reduction of the glycolytic intermediate dihydroxyacetone phosphate (DHAP) to sn-glycerol 3-phosphate (G3P), the key precursor for phospholipid synthesis.</text>
</comment>
<comment type="catalytic activity">
    <reaction evidence="1">
        <text>sn-glycerol 3-phosphate + NAD(+) = dihydroxyacetone phosphate + NADH + H(+)</text>
        <dbReference type="Rhea" id="RHEA:11092"/>
        <dbReference type="ChEBI" id="CHEBI:15378"/>
        <dbReference type="ChEBI" id="CHEBI:57540"/>
        <dbReference type="ChEBI" id="CHEBI:57597"/>
        <dbReference type="ChEBI" id="CHEBI:57642"/>
        <dbReference type="ChEBI" id="CHEBI:57945"/>
        <dbReference type="EC" id="1.1.1.94"/>
    </reaction>
    <physiologicalReaction direction="right-to-left" evidence="1">
        <dbReference type="Rhea" id="RHEA:11094"/>
    </physiologicalReaction>
</comment>
<comment type="catalytic activity">
    <reaction evidence="1">
        <text>sn-glycerol 3-phosphate + NADP(+) = dihydroxyacetone phosphate + NADPH + H(+)</text>
        <dbReference type="Rhea" id="RHEA:11096"/>
        <dbReference type="ChEBI" id="CHEBI:15378"/>
        <dbReference type="ChEBI" id="CHEBI:57597"/>
        <dbReference type="ChEBI" id="CHEBI:57642"/>
        <dbReference type="ChEBI" id="CHEBI:57783"/>
        <dbReference type="ChEBI" id="CHEBI:58349"/>
        <dbReference type="EC" id="1.1.1.94"/>
    </reaction>
    <physiologicalReaction direction="right-to-left" evidence="1">
        <dbReference type="Rhea" id="RHEA:11098"/>
    </physiologicalReaction>
</comment>
<comment type="pathway">
    <text evidence="1">Membrane lipid metabolism; glycerophospholipid metabolism.</text>
</comment>
<comment type="subcellular location">
    <subcellularLocation>
        <location evidence="1">Cytoplasm</location>
    </subcellularLocation>
</comment>
<comment type="similarity">
    <text evidence="1">Belongs to the NAD-dependent glycerol-3-phosphate dehydrogenase family.</text>
</comment>
<sequence>MSDNPTIAPKIVVVGAGAFGTALAAVAAASANANVTLLSRREEVAEECRRTGRNERALPGIALPAGLGFSSEAAALAGADIVLFAMPSQEHRAAAQQYGTAIGADATIVTCAKGMEQSTGRLLTELLAEELPGHRIGVLSGPGFAADIAKGLPTAMVVAAPDMAVATELAEALSGPTFRLYPSTDRIGVQLGGALKNVLAIACGIVEGAGLGDSARAALISRGLAEMSRFIAARGGEADTVRGLSGLGDLVLTATSHQSRNLRFGIALGKNGRADGRGAELVEGAFAASVAARVAGDLGIEMPITEAVAAIIDGKLDVRTALEQLMSRPITQE</sequence>
<name>GPDA_SINFN</name>
<accession>C3MAF3</accession>
<organism>
    <name type="scientific">Sinorhizobium fredii (strain NBRC 101917 / NGR234)</name>
    <dbReference type="NCBI Taxonomy" id="394"/>
    <lineage>
        <taxon>Bacteria</taxon>
        <taxon>Pseudomonadati</taxon>
        <taxon>Pseudomonadota</taxon>
        <taxon>Alphaproteobacteria</taxon>
        <taxon>Hyphomicrobiales</taxon>
        <taxon>Rhizobiaceae</taxon>
        <taxon>Sinorhizobium/Ensifer group</taxon>
        <taxon>Sinorhizobium</taxon>
    </lineage>
</organism>
<feature type="chain" id="PRO_1000190168" description="Glycerol-3-phosphate dehydrogenase [NAD(P)+]">
    <location>
        <begin position="1"/>
        <end position="333"/>
    </location>
</feature>
<feature type="active site" description="Proton acceptor" evidence="1">
    <location>
        <position position="196"/>
    </location>
</feature>
<feature type="binding site" evidence="1">
    <location>
        <position position="19"/>
    </location>
    <ligand>
        <name>NADPH</name>
        <dbReference type="ChEBI" id="CHEBI:57783"/>
    </ligand>
</feature>
<feature type="binding site" evidence="1">
    <location>
        <position position="40"/>
    </location>
    <ligand>
        <name>NADPH</name>
        <dbReference type="ChEBI" id="CHEBI:57783"/>
    </ligand>
</feature>
<feature type="binding site" evidence="1">
    <location>
        <position position="41"/>
    </location>
    <ligand>
        <name>NADPH</name>
        <dbReference type="ChEBI" id="CHEBI:57783"/>
    </ligand>
</feature>
<feature type="binding site" evidence="1">
    <location>
        <position position="113"/>
    </location>
    <ligand>
        <name>NADPH</name>
        <dbReference type="ChEBI" id="CHEBI:57783"/>
    </ligand>
</feature>
<feature type="binding site" evidence="1">
    <location>
        <position position="113"/>
    </location>
    <ligand>
        <name>sn-glycerol 3-phosphate</name>
        <dbReference type="ChEBI" id="CHEBI:57597"/>
    </ligand>
</feature>
<feature type="binding site" evidence="1">
    <location>
        <position position="141"/>
    </location>
    <ligand>
        <name>sn-glycerol 3-phosphate</name>
        <dbReference type="ChEBI" id="CHEBI:57597"/>
    </ligand>
</feature>
<feature type="binding site" evidence="1">
    <location>
        <position position="145"/>
    </location>
    <ligand>
        <name>NADPH</name>
        <dbReference type="ChEBI" id="CHEBI:57783"/>
    </ligand>
</feature>
<feature type="binding site" evidence="1">
    <location>
        <position position="196"/>
    </location>
    <ligand>
        <name>sn-glycerol 3-phosphate</name>
        <dbReference type="ChEBI" id="CHEBI:57597"/>
    </ligand>
</feature>
<feature type="binding site" evidence="1">
    <location>
        <position position="249"/>
    </location>
    <ligand>
        <name>sn-glycerol 3-phosphate</name>
        <dbReference type="ChEBI" id="CHEBI:57597"/>
    </ligand>
</feature>
<feature type="binding site" evidence="1">
    <location>
        <position position="259"/>
    </location>
    <ligand>
        <name>sn-glycerol 3-phosphate</name>
        <dbReference type="ChEBI" id="CHEBI:57597"/>
    </ligand>
</feature>
<feature type="binding site" evidence="1">
    <location>
        <position position="260"/>
    </location>
    <ligand>
        <name>NADPH</name>
        <dbReference type="ChEBI" id="CHEBI:57783"/>
    </ligand>
</feature>
<feature type="binding site" evidence="1">
    <location>
        <position position="260"/>
    </location>
    <ligand>
        <name>sn-glycerol 3-phosphate</name>
        <dbReference type="ChEBI" id="CHEBI:57597"/>
    </ligand>
</feature>
<feature type="binding site" evidence="1">
    <location>
        <position position="261"/>
    </location>
    <ligand>
        <name>sn-glycerol 3-phosphate</name>
        <dbReference type="ChEBI" id="CHEBI:57597"/>
    </ligand>
</feature>
<feature type="binding site" evidence="1">
    <location>
        <position position="282"/>
    </location>
    <ligand>
        <name>NADPH</name>
        <dbReference type="ChEBI" id="CHEBI:57783"/>
    </ligand>
</feature>
<feature type="binding site" evidence="1">
    <location>
        <position position="283"/>
    </location>
    <ligand>
        <name>NADPH</name>
        <dbReference type="ChEBI" id="CHEBI:57783"/>
    </ligand>
</feature>
<proteinExistence type="inferred from homology"/>
<protein>
    <recommendedName>
        <fullName evidence="1">Glycerol-3-phosphate dehydrogenase [NAD(P)+]</fullName>
        <ecNumber evidence="1">1.1.1.94</ecNumber>
    </recommendedName>
    <alternativeName>
        <fullName evidence="1">NAD(P)(+)-dependent glycerol-3-phosphate dehydrogenase</fullName>
    </alternativeName>
    <alternativeName>
        <fullName evidence="1">NAD(P)H-dependent dihydroxyacetone-phosphate reductase</fullName>
    </alternativeName>
</protein>
<gene>
    <name evidence="1" type="primary">gpsA</name>
    <name type="ordered locus">NGR_c32130</name>
</gene>
<evidence type="ECO:0000255" key="1">
    <source>
        <dbReference type="HAMAP-Rule" id="MF_00394"/>
    </source>
</evidence>
<dbReference type="EC" id="1.1.1.94" evidence="1"/>
<dbReference type="EMBL" id="CP001389">
    <property type="protein sequence ID" value="ACP26946.1"/>
    <property type="molecule type" value="Genomic_DNA"/>
</dbReference>
<dbReference type="RefSeq" id="WP_012709694.1">
    <property type="nucleotide sequence ID" value="NC_012587.1"/>
</dbReference>
<dbReference type="RefSeq" id="YP_002827699.1">
    <property type="nucleotide sequence ID" value="NC_012587.1"/>
</dbReference>
<dbReference type="SMR" id="C3MAF3"/>
<dbReference type="STRING" id="394.NGR_c32130"/>
<dbReference type="KEGG" id="rhi:NGR_c32130"/>
<dbReference type="PATRIC" id="fig|394.7.peg.6051"/>
<dbReference type="eggNOG" id="COG0240">
    <property type="taxonomic scope" value="Bacteria"/>
</dbReference>
<dbReference type="HOGENOM" id="CLU_033449_0_2_5"/>
<dbReference type="OrthoDB" id="9812273at2"/>
<dbReference type="UniPathway" id="UPA00940"/>
<dbReference type="Proteomes" id="UP000001054">
    <property type="component" value="Chromosome"/>
</dbReference>
<dbReference type="GO" id="GO:0005829">
    <property type="term" value="C:cytosol"/>
    <property type="evidence" value="ECO:0007669"/>
    <property type="project" value="TreeGrafter"/>
</dbReference>
<dbReference type="GO" id="GO:0047952">
    <property type="term" value="F:glycerol-3-phosphate dehydrogenase [NAD(P)+] activity"/>
    <property type="evidence" value="ECO:0007669"/>
    <property type="project" value="UniProtKB-UniRule"/>
</dbReference>
<dbReference type="GO" id="GO:0051287">
    <property type="term" value="F:NAD binding"/>
    <property type="evidence" value="ECO:0007669"/>
    <property type="project" value="InterPro"/>
</dbReference>
<dbReference type="GO" id="GO:0005975">
    <property type="term" value="P:carbohydrate metabolic process"/>
    <property type="evidence" value="ECO:0007669"/>
    <property type="project" value="InterPro"/>
</dbReference>
<dbReference type="GO" id="GO:0046167">
    <property type="term" value="P:glycerol-3-phosphate biosynthetic process"/>
    <property type="evidence" value="ECO:0007669"/>
    <property type="project" value="UniProtKB-UniRule"/>
</dbReference>
<dbReference type="GO" id="GO:0046168">
    <property type="term" value="P:glycerol-3-phosphate catabolic process"/>
    <property type="evidence" value="ECO:0007669"/>
    <property type="project" value="InterPro"/>
</dbReference>
<dbReference type="GO" id="GO:0006650">
    <property type="term" value="P:glycerophospholipid metabolic process"/>
    <property type="evidence" value="ECO:0007669"/>
    <property type="project" value="UniProtKB-UniRule"/>
</dbReference>
<dbReference type="GO" id="GO:0008654">
    <property type="term" value="P:phospholipid biosynthetic process"/>
    <property type="evidence" value="ECO:0007669"/>
    <property type="project" value="UniProtKB-KW"/>
</dbReference>
<dbReference type="FunFam" id="3.40.50.720:FF:000019">
    <property type="entry name" value="Glycerol-3-phosphate dehydrogenase [NAD(P)+]"/>
    <property type="match status" value="1"/>
</dbReference>
<dbReference type="Gene3D" id="1.10.1040.10">
    <property type="entry name" value="N-(1-d-carboxylethyl)-l-norvaline Dehydrogenase, domain 2"/>
    <property type="match status" value="1"/>
</dbReference>
<dbReference type="Gene3D" id="3.40.50.720">
    <property type="entry name" value="NAD(P)-binding Rossmann-like Domain"/>
    <property type="match status" value="1"/>
</dbReference>
<dbReference type="HAMAP" id="MF_00394">
    <property type="entry name" value="NAD_Glyc3P_dehydrog"/>
    <property type="match status" value="1"/>
</dbReference>
<dbReference type="InterPro" id="IPR008927">
    <property type="entry name" value="6-PGluconate_DH-like_C_sf"/>
</dbReference>
<dbReference type="InterPro" id="IPR013328">
    <property type="entry name" value="6PGD_dom2"/>
</dbReference>
<dbReference type="InterPro" id="IPR006168">
    <property type="entry name" value="G3P_DH_NAD-dep"/>
</dbReference>
<dbReference type="InterPro" id="IPR006109">
    <property type="entry name" value="G3P_DH_NAD-dep_C"/>
</dbReference>
<dbReference type="InterPro" id="IPR011128">
    <property type="entry name" value="G3P_DH_NAD-dep_N"/>
</dbReference>
<dbReference type="InterPro" id="IPR036291">
    <property type="entry name" value="NAD(P)-bd_dom_sf"/>
</dbReference>
<dbReference type="NCBIfam" id="NF000940">
    <property type="entry name" value="PRK00094.1-2"/>
    <property type="match status" value="1"/>
</dbReference>
<dbReference type="NCBIfam" id="NF000942">
    <property type="entry name" value="PRK00094.1-4"/>
    <property type="match status" value="1"/>
</dbReference>
<dbReference type="PANTHER" id="PTHR11728">
    <property type="entry name" value="GLYCEROL-3-PHOSPHATE DEHYDROGENASE"/>
    <property type="match status" value="1"/>
</dbReference>
<dbReference type="PANTHER" id="PTHR11728:SF1">
    <property type="entry name" value="GLYCEROL-3-PHOSPHATE DEHYDROGENASE [NAD(+)] 2, CHLOROPLASTIC"/>
    <property type="match status" value="1"/>
</dbReference>
<dbReference type="Pfam" id="PF07479">
    <property type="entry name" value="NAD_Gly3P_dh_C"/>
    <property type="match status" value="1"/>
</dbReference>
<dbReference type="Pfam" id="PF01210">
    <property type="entry name" value="NAD_Gly3P_dh_N"/>
    <property type="match status" value="1"/>
</dbReference>
<dbReference type="PIRSF" id="PIRSF000114">
    <property type="entry name" value="Glycerol-3-P_dh"/>
    <property type="match status" value="1"/>
</dbReference>
<dbReference type="PRINTS" id="PR00077">
    <property type="entry name" value="GPDHDRGNASE"/>
</dbReference>
<dbReference type="SUPFAM" id="SSF48179">
    <property type="entry name" value="6-phosphogluconate dehydrogenase C-terminal domain-like"/>
    <property type="match status" value="1"/>
</dbReference>
<dbReference type="SUPFAM" id="SSF51735">
    <property type="entry name" value="NAD(P)-binding Rossmann-fold domains"/>
    <property type="match status" value="1"/>
</dbReference>
<dbReference type="PROSITE" id="PS00957">
    <property type="entry name" value="NAD_G3PDH"/>
    <property type="match status" value="1"/>
</dbReference>
<keyword id="KW-0963">Cytoplasm</keyword>
<keyword id="KW-0444">Lipid biosynthesis</keyword>
<keyword id="KW-0443">Lipid metabolism</keyword>
<keyword id="KW-0520">NAD</keyword>
<keyword id="KW-0521">NADP</keyword>
<keyword id="KW-0547">Nucleotide-binding</keyword>
<keyword id="KW-0560">Oxidoreductase</keyword>
<keyword id="KW-0594">Phospholipid biosynthesis</keyword>
<keyword id="KW-1208">Phospholipid metabolism</keyword>
<keyword id="KW-1185">Reference proteome</keyword>